<accession>Q6G4W3</accession>
<proteinExistence type="inferred from homology"/>
<comment type="function">
    <text evidence="2">Catalyzes the formation of N(7)-methylguanine at position 46 (m7G46) in tRNA.</text>
</comment>
<comment type="catalytic activity">
    <reaction evidence="2">
        <text>guanosine(46) in tRNA + S-adenosyl-L-methionine = N(7)-methylguanosine(46) in tRNA + S-adenosyl-L-homocysteine</text>
        <dbReference type="Rhea" id="RHEA:42708"/>
        <dbReference type="Rhea" id="RHEA-COMP:10188"/>
        <dbReference type="Rhea" id="RHEA-COMP:10189"/>
        <dbReference type="ChEBI" id="CHEBI:57856"/>
        <dbReference type="ChEBI" id="CHEBI:59789"/>
        <dbReference type="ChEBI" id="CHEBI:74269"/>
        <dbReference type="ChEBI" id="CHEBI:74480"/>
        <dbReference type="EC" id="2.1.1.33"/>
    </reaction>
</comment>
<comment type="pathway">
    <text evidence="2">tRNA modification; N(7)-methylguanine-tRNA biosynthesis.</text>
</comment>
<comment type="similarity">
    <text evidence="2">Belongs to the class I-like SAM-binding methyltransferase superfamily. TrmB family.</text>
</comment>
<keyword id="KW-0489">Methyltransferase</keyword>
<keyword id="KW-0949">S-adenosyl-L-methionine</keyword>
<keyword id="KW-0808">Transferase</keyword>
<keyword id="KW-0819">tRNA processing</keyword>
<evidence type="ECO:0000250" key="1"/>
<evidence type="ECO:0000255" key="2">
    <source>
        <dbReference type="HAMAP-Rule" id="MF_01057"/>
    </source>
</evidence>
<sequence length="233" mass="27515">MIDHNIRTGKAFFGRRKGKRLRNSQLVLIKKLFPTLDINLNNSVPLNLTSLFSRKVKEVRLEIGFGGGEHLLHEMKHFPQTGFIGIEPFINGMAKMLMSLEEHKQYQNQLRLYNDDATGLLDWLPNASLDGIDLFYPDPWPKKKHWKRRFINMKNLNRFARVLKTGKKFRFASDIESYVNWTLYHCSNHHSFEWEAKNPKDWKTPYTLWSGTRYEAKALREGRAPTYLTFIKK</sequence>
<gene>
    <name evidence="2" type="primary">trmB</name>
    <name type="ordered locus">BH02190</name>
</gene>
<reference key="1">
    <citation type="journal article" date="2004" name="Proc. Natl. Acad. Sci. U.S.A.">
        <title>The louse-borne human pathogen Bartonella quintana is a genomic derivative of the zoonotic agent Bartonella henselae.</title>
        <authorList>
            <person name="Alsmark U.C.M."/>
            <person name="Frank A.C."/>
            <person name="Karlberg E.O."/>
            <person name="Legault B.-A."/>
            <person name="Ardell D.H."/>
            <person name="Canbaeck B."/>
            <person name="Eriksson A.-S."/>
            <person name="Naeslund A.K."/>
            <person name="Handley S.A."/>
            <person name="Huvet M."/>
            <person name="La Scola B."/>
            <person name="Holmberg M."/>
            <person name="Andersson S.G.E."/>
        </authorList>
    </citation>
    <scope>NUCLEOTIDE SEQUENCE [LARGE SCALE GENOMIC DNA]</scope>
    <source>
        <strain>ATCC 49882 / DSM 28221 / CCUG 30454 / Houston 1</strain>
    </source>
</reference>
<dbReference type="EC" id="2.1.1.33" evidence="2"/>
<dbReference type="EMBL" id="BX897699">
    <property type="protein sequence ID" value="CAF27031.1"/>
    <property type="molecule type" value="Genomic_DNA"/>
</dbReference>
<dbReference type="RefSeq" id="WP_011180170.1">
    <property type="nucleotide sequence ID" value="NZ_LRIJ02000001.1"/>
</dbReference>
<dbReference type="SMR" id="Q6G4W3"/>
<dbReference type="PaxDb" id="283166-BH02190"/>
<dbReference type="EnsemblBacteria" id="CAF27031">
    <property type="protein sequence ID" value="CAF27031"/>
    <property type="gene ID" value="BH02190"/>
</dbReference>
<dbReference type="KEGG" id="bhe:BH02190"/>
<dbReference type="eggNOG" id="COG0220">
    <property type="taxonomic scope" value="Bacteria"/>
</dbReference>
<dbReference type="OrthoDB" id="9802090at2"/>
<dbReference type="UniPathway" id="UPA00989"/>
<dbReference type="Proteomes" id="UP000000421">
    <property type="component" value="Chromosome"/>
</dbReference>
<dbReference type="GO" id="GO:0043527">
    <property type="term" value="C:tRNA methyltransferase complex"/>
    <property type="evidence" value="ECO:0007669"/>
    <property type="project" value="TreeGrafter"/>
</dbReference>
<dbReference type="GO" id="GO:0008176">
    <property type="term" value="F:tRNA (guanine(46)-N7)-methyltransferase activity"/>
    <property type="evidence" value="ECO:0007669"/>
    <property type="project" value="UniProtKB-UniRule"/>
</dbReference>
<dbReference type="Gene3D" id="3.40.50.150">
    <property type="entry name" value="Vaccinia Virus protein VP39"/>
    <property type="match status" value="1"/>
</dbReference>
<dbReference type="HAMAP" id="MF_01057">
    <property type="entry name" value="tRNA_methyltr_TrmB"/>
    <property type="match status" value="1"/>
</dbReference>
<dbReference type="InterPro" id="IPR029063">
    <property type="entry name" value="SAM-dependent_MTases_sf"/>
</dbReference>
<dbReference type="InterPro" id="IPR003358">
    <property type="entry name" value="tRNA_(Gua-N-7)_MeTrfase_Trmb"/>
</dbReference>
<dbReference type="InterPro" id="IPR055361">
    <property type="entry name" value="tRNA_methyltr_TrmB_bact"/>
</dbReference>
<dbReference type="PANTHER" id="PTHR23417">
    <property type="entry name" value="3-DEOXY-D-MANNO-OCTULOSONIC-ACID TRANSFERASE/TRNA GUANINE-N 7 - -METHYLTRANSFERASE"/>
    <property type="match status" value="1"/>
</dbReference>
<dbReference type="PANTHER" id="PTHR23417:SF14">
    <property type="entry name" value="PENTACOTRIPEPTIDE-REPEAT REGION OF PRORP DOMAIN-CONTAINING PROTEIN"/>
    <property type="match status" value="1"/>
</dbReference>
<dbReference type="Pfam" id="PF02390">
    <property type="entry name" value="Methyltransf_4"/>
    <property type="match status" value="1"/>
</dbReference>
<dbReference type="SUPFAM" id="SSF53335">
    <property type="entry name" value="S-adenosyl-L-methionine-dependent methyltransferases"/>
    <property type="match status" value="1"/>
</dbReference>
<dbReference type="PROSITE" id="PS51625">
    <property type="entry name" value="SAM_MT_TRMB"/>
    <property type="match status" value="1"/>
</dbReference>
<organism>
    <name type="scientific">Bartonella henselae (strain ATCC 49882 / DSM 28221 / CCUG 30454 / Houston 1)</name>
    <name type="common">Rochalimaea henselae</name>
    <dbReference type="NCBI Taxonomy" id="283166"/>
    <lineage>
        <taxon>Bacteria</taxon>
        <taxon>Pseudomonadati</taxon>
        <taxon>Pseudomonadota</taxon>
        <taxon>Alphaproteobacteria</taxon>
        <taxon>Hyphomicrobiales</taxon>
        <taxon>Bartonellaceae</taxon>
        <taxon>Bartonella</taxon>
    </lineage>
</organism>
<name>TRMB_BARHE</name>
<protein>
    <recommendedName>
        <fullName evidence="2">tRNA (guanine-N(7)-)-methyltransferase</fullName>
        <ecNumber evidence="2">2.1.1.33</ecNumber>
    </recommendedName>
    <alternativeName>
        <fullName evidence="2">tRNA (guanine(46)-N(7))-methyltransferase</fullName>
    </alternativeName>
    <alternativeName>
        <fullName evidence="2">tRNA(m7G46)-methyltransferase</fullName>
    </alternativeName>
</protein>
<feature type="chain" id="PRO_0000171297" description="tRNA (guanine-N(7)-)-methyltransferase">
    <location>
        <begin position="1"/>
        <end position="233"/>
    </location>
</feature>
<feature type="active site" evidence="1">
    <location>
        <position position="138"/>
    </location>
</feature>
<feature type="binding site" evidence="2">
    <location>
        <position position="62"/>
    </location>
    <ligand>
        <name>S-adenosyl-L-methionine</name>
        <dbReference type="ChEBI" id="CHEBI:59789"/>
    </ligand>
</feature>
<feature type="binding site" evidence="2">
    <location>
        <position position="87"/>
    </location>
    <ligand>
        <name>S-adenosyl-L-methionine</name>
        <dbReference type="ChEBI" id="CHEBI:59789"/>
    </ligand>
</feature>
<feature type="binding site" evidence="2">
    <location>
        <position position="116"/>
    </location>
    <ligand>
        <name>S-adenosyl-L-methionine</name>
        <dbReference type="ChEBI" id="CHEBI:59789"/>
    </ligand>
</feature>
<feature type="binding site" evidence="2">
    <location>
        <position position="138"/>
    </location>
    <ligand>
        <name>S-adenosyl-L-methionine</name>
        <dbReference type="ChEBI" id="CHEBI:59789"/>
    </ligand>
</feature>
<feature type="binding site" evidence="2">
    <location>
        <position position="142"/>
    </location>
    <ligand>
        <name>substrate</name>
    </ligand>
</feature>
<feature type="binding site" evidence="2">
    <location>
        <position position="174"/>
    </location>
    <ligand>
        <name>substrate</name>
    </ligand>
</feature>
<feature type="binding site" evidence="2">
    <location>
        <begin position="212"/>
        <end position="215"/>
    </location>
    <ligand>
        <name>substrate</name>
    </ligand>
</feature>